<name>NU5C1_PAUCH</name>
<keyword id="KW-0472">Membrane</keyword>
<keyword id="KW-0520">NAD</keyword>
<keyword id="KW-0521">NADP</keyword>
<keyword id="KW-0994">Organellar chromatophore</keyword>
<keyword id="KW-0934">Plastid</keyword>
<keyword id="KW-0618">Plastoquinone</keyword>
<keyword id="KW-0874">Quinone</keyword>
<keyword id="KW-0793">Thylakoid</keyword>
<keyword id="KW-1278">Translocase</keyword>
<keyword id="KW-0812">Transmembrane</keyword>
<keyword id="KW-1133">Transmembrane helix</keyword>
<keyword id="KW-0813">Transport</keyword>
<proteinExistence type="inferred from homology"/>
<accession>B1X491</accession>
<sequence length="666" mass="72959">MLRRAVELVWLIPILPFIGAFLVGFGLISFNKKVNQLRKPAALLLISSVGISAVLSFMVLADQIGGAPCSEVLFSWASAGTFNLEMGYRVDPIGATMLALVSTVAILVMVYSDGYMSHDKSYVRFFTYLGLFTSSMLALILSPNLLEIYVFWELVGMCSYLLIGFWYEREDAANAAQKAFVVNRVGDFGFLLGILGLFWATNSFDFQIVATKMAASISDGSIPHWAAIALCLLLFMGPMAKSAQFPLHVWLPDAMEGPTPISALIHAATMVAAGVFLVARLEPLYSQVPDVQIIVAVIGTITCFLGASIALIQMDLKKGLAYSTISQLGYMMLAMGCGAPVAGMFHLITHAFFKAMLFLGSGSVIHAMEEVVGHDPTLAQDMRLMGGLRKTMPITGITFFIGCVAISGIPPLAGFWSKDEILSKAFDSYPLLWGVGLFTAGLTAFYMFRLYFLTFEGEFRGNNIALREKLLIAAGKSFDPIETKEIQSTHESGWQMTLPLVILSVPSVLIGFLGSPWNNRFGMLLYPEEALEAAKTFSWGEFLPLAIASVMISTCGIVIATIAYAYHWIDLGQSVASRLKIINNFLVNKWYLDKINEYIFVNGSRGLAKKILNLDETVLDKAVVETGLTTLDAGKWLSYFETGRPQFYALIIFGGVISLIVIFNRL</sequence>
<organism>
    <name type="scientific">Paulinella chromatophora</name>
    <dbReference type="NCBI Taxonomy" id="39717"/>
    <lineage>
        <taxon>Eukaryota</taxon>
        <taxon>Sar</taxon>
        <taxon>Rhizaria</taxon>
        <taxon>Cercozoa</taxon>
        <taxon>Imbricatea</taxon>
        <taxon>Silicofilosea</taxon>
        <taxon>Euglyphida</taxon>
        <taxon>Paulinellidae</taxon>
        <taxon>Paulinella</taxon>
    </lineage>
</organism>
<geneLocation type="organellar chromatophore"/>
<protein>
    <recommendedName>
        <fullName>NAD(P)H-quinone oxidoreductase subunit 5, organellar chromatophore 1</fullName>
        <ecNumber>7.1.1.-</ecNumber>
    </recommendedName>
    <alternativeName>
        <fullName>NAD(P)H dehydrogenase subunit 5 1</fullName>
    </alternativeName>
    <alternativeName>
        <fullName>NADH-plastoquinone oxidoreductase subunit 5 1</fullName>
    </alternativeName>
</protein>
<evidence type="ECO:0000250" key="1"/>
<evidence type="ECO:0000255" key="2"/>
<evidence type="ECO:0000305" key="3"/>
<feature type="chain" id="PRO_0000360976" description="NAD(P)H-quinone oxidoreductase subunit 5, organellar chromatophore 1">
    <location>
        <begin position="1"/>
        <end position="666"/>
    </location>
</feature>
<feature type="transmembrane region" description="Helical" evidence="2">
    <location>
        <begin position="8"/>
        <end position="28"/>
    </location>
</feature>
<feature type="transmembrane region" description="Helical" evidence="2">
    <location>
        <begin position="41"/>
        <end position="61"/>
    </location>
</feature>
<feature type="transmembrane region" description="Helical" evidence="2">
    <location>
        <begin position="90"/>
        <end position="110"/>
    </location>
</feature>
<feature type="transmembrane region" description="Helical" evidence="2">
    <location>
        <begin position="121"/>
        <end position="141"/>
    </location>
</feature>
<feature type="transmembrane region" description="Helical" evidence="2">
    <location>
        <begin position="145"/>
        <end position="165"/>
    </location>
</feature>
<feature type="transmembrane region" description="Helical" evidence="2">
    <location>
        <begin position="190"/>
        <end position="210"/>
    </location>
</feature>
<feature type="transmembrane region" description="Helical" evidence="2">
    <location>
        <begin position="220"/>
        <end position="240"/>
    </location>
</feature>
<feature type="transmembrane region" description="Helical" evidence="2">
    <location>
        <begin position="259"/>
        <end position="279"/>
    </location>
</feature>
<feature type="transmembrane region" description="Helical" evidence="2">
    <location>
        <begin position="293"/>
        <end position="313"/>
    </location>
</feature>
<feature type="transmembrane region" description="Helical" evidence="2">
    <location>
        <begin position="328"/>
        <end position="348"/>
    </location>
</feature>
<feature type="transmembrane region" description="Helical" evidence="2">
    <location>
        <begin position="396"/>
        <end position="416"/>
    </location>
</feature>
<feature type="transmembrane region" description="Helical" evidence="2">
    <location>
        <begin position="428"/>
        <end position="448"/>
    </location>
</feature>
<feature type="transmembrane region" description="Helical" evidence="2">
    <location>
        <begin position="497"/>
        <end position="517"/>
    </location>
</feature>
<feature type="transmembrane region" description="Helical" evidence="2">
    <location>
        <begin position="542"/>
        <end position="562"/>
    </location>
</feature>
<feature type="transmembrane region" description="Helical" evidence="2">
    <location>
        <begin position="643"/>
        <end position="663"/>
    </location>
</feature>
<dbReference type="EC" id="7.1.1.-"/>
<dbReference type="EMBL" id="CP000815">
    <property type="protein sequence ID" value="ACB42760.1"/>
    <property type="molecule type" value="Genomic_DNA"/>
</dbReference>
<dbReference type="SMR" id="B1X491"/>
<dbReference type="GO" id="GO:0070118">
    <property type="term" value="C:organellar chromatophore thylakoid membrane"/>
    <property type="evidence" value="ECO:0007669"/>
    <property type="project" value="UniProtKB-SubCell"/>
</dbReference>
<dbReference type="GO" id="GO:0009536">
    <property type="term" value="C:plastid"/>
    <property type="evidence" value="ECO:0007669"/>
    <property type="project" value="UniProtKB-KW"/>
</dbReference>
<dbReference type="GO" id="GO:0008137">
    <property type="term" value="F:NADH dehydrogenase (ubiquinone) activity"/>
    <property type="evidence" value="ECO:0007669"/>
    <property type="project" value="InterPro"/>
</dbReference>
<dbReference type="GO" id="GO:0048038">
    <property type="term" value="F:quinone binding"/>
    <property type="evidence" value="ECO:0007669"/>
    <property type="project" value="UniProtKB-KW"/>
</dbReference>
<dbReference type="GO" id="GO:0042773">
    <property type="term" value="P:ATP synthesis coupled electron transport"/>
    <property type="evidence" value="ECO:0007669"/>
    <property type="project" value="InterPro"/>
</dbReference>
<dbReference type="GO" id="GO:0015990">
    <property type="term" value="P:electron transport coupled proton transport"/>
    <property type="evidence" value="ECO:0007669"/>
    <property type="project" value="TreeGrafter"/>
</dbReference>
<dbReference type="Gene3D" id="1.20.5.2700">
    <property type="match status" value="1"/>
</dbReference>
<dbReference type="InterPro" id="IPR002128">
    <property type="entry name" value="NADH_UbQ_OxRdtase_chlpt_su5_C"/>
</dbReference>
<dbReference type="InterPro" id="IPR018393">
    <property type="entry name" value="NADHpl_OxRdtase_5_subgr"/>
</dbReference>
<dbReference type="InterPro" id="IPR001750">
    <property type="entry name" value="ND/Mrp_TM"/>
</dbReference>
<dbReference type="InterPro" id="IPR003945">
    <property type="entry name" value="NU5C-like"/>
</dbReference>
<dbReference type="InterPro" id="IPR001516">
    <property type="entry name" value="Proton_antipo_N"/>
</dbReference>
<dbReference type="NCBIfam" id="TIGR01974">
    <property type="entry name" value="NDH_I_L"/>
    <property type="match status" value="1"/>
</dbReference>
<dbReference type="NCBIfam" id="NF005141">
    <property type="entry name" value="PRK06590.1"/>
    <property type="match status" value="1"/>
</dbReference>
<dbReference type="NCBIfam" id="NF005626">
    <property type="entry name" value="PRK07376.1"/>
    <property type="match status" value="1"/>
</dbReference>
<dbReference type="PANTHER" id="PTHR42829">
    <property type="entry name" value="NADH-UBIQUINONE OXIDOREDUCTASE CHAIN 5"/>
    <property type="match status" value="1"/>
</dbReference>
<dbReference type="PANTHER" id="PTHR42829:SF2">
    <property type="entry name" value="NADH-UBIQUINONE OXIDOREDUCTASE CHAIN 5"/>
    <property type="match status" value="1"/>
</dbReference>
<dbReference type="Pfam" id="PF01010">
    <property type="entry name" value="Proton_antipo_C"/>
    <property type="match status" value="1"/>
</dbReference>
<dbReference type="Pfam" id="PF00361">
    <property type="entry name" value="Proton_antipo_M"/>
    <property type="match status" value="1"/>
</dbReference>
<dbReference type="Pfam" id="PF00662">
    <property type="entry name" value="Proton_antipo_N"/>
    <property type="match status" value="1"/>
</dbReference>
<dbReference type="PRINTS" id="PR01434">
    <property type="entry name" value="NADHDHGNASE5"/>
</dbReference>
<dbReference type="PRINTS" id="PR01435">
    <property type="entry name" value="NPOXDRDTASE5"/>
</dbReference>
<reference key="1">
    <citation type="journal article" date="2008" name="Curr. Biol.">
        <title>Chromatophore genome sequence of Paulinella sheds light on acquisition of photosynthesis by eukaryotes.</title>
        <authorList>
            <person name="Nowack E.C.M."/>
            <person name="Melkonian M."/>
            <person name="Gloeckner G."/>
        </authorList>
    </citation>
    <scope>NUCLEOTIDE SEQUENCE [LARGE SCALE GENOMIC DNA]</scope>
</reference>
<gene>
    <name type="primary">ndhF1</name>
    <name type="ordered locus">PCC_0319</name>
</gene>
<comment type="function">
    <text evidence="1">NDH shuttles electrons from NAD(P)H:plastoquinone, via FMN and iron-sulfur (Fe-S) centers, to quinones in the photosynthetic chain and possibly in a chloroplast respiratory chain. The immediate electron acceptor for the enzyme in this species is believed to be plastoquinone. Couples the redox reaction to proton translocation, and thus conserves the redox energy in a proton gradient (By similarity).</text>
</comment>
<comment type="catalytic activity">
    <reaction>
        <text>a plastoquinone + NADH + (n+1) H(+)(in) = a plastoquinol + NAD(+) + n H(+)(out)</text>
        <dbReference type="Rhea" id="RHEA:42608"/>
        <dbReference type="Rhea" id="RHEA-COMP:9561"/>
        <dbReference type="Rhea" id="RHEA-COMP:9562"/>
        <dbReference type="ChEBI" id="CHEBI:15378"/>
        <dbReference type="ChEBI" id="CHEBI:17757"/>
        <dbReference type="ChEBI" id="CHEBI:57540"/>
        <dbReference type="ChEBI" id="CHEBI:57945"/>
        <dbReference type="ChEBI" id="CHEBI:62192"/>
    </reaction>
</comment>
<comment type="catalytic activity">
    <reaction>
        <text>a plastoquinone + NADPH + (n+1) H(+)(in) = a plastoquinol + NADP(+) + n H(+)(out)</text>
        <dbReference type="Rhea" id="RHEA:42612"/>
        <dbReference type="Rhea" id="RHEA-COMP:9561"/>
        <dbReference type="Rhea" id="RHEA-COMP:9562"/>
        <dbReference type="ChEBI" id="CHEBI:15378"/>
        <dbReference type="ChEBI" id="CHEBI:17757"/>
        <dbReference type="ChEBI" id="CHEBI:57783"/>
        <dbReference type="ChEBI" id="CHEBI:58349"/>
        <dbReference type="ChEBI" id="CHEBI:62192"/>
    </reaction>
</comment>
<comment type="subunit">
    <text evidence="1">NDH is composed of at least 16 different subunits, 5 of which are encoded in the nucleus.</text>
</comment>
<comment type="subcellular location">
    <subcellularLocation>
        <location evidence="1">Plastid</location>
        <location evidence="1">Organellar chromatophore thylakoid membrane</location>
        <topology evidence="1">Multi-pass membrane protein</topology>
    </subcellularLocation>
</comment>
<comment type="similarity">
    <text evidence="3">Belongs to the complex I subunit 5 family.</text>
</comment>